<sequence>MQKVVKLNNIKIGNDLPFVLITGPCQIEGKDHALFMAEKLVKLTSKLEIPFIYKSSFDKANRTSVHGIRGVGIEKGLDILSKVKSEFDCPIVTDVHSESQCIETAEVADILQIPAFLCRQTDLLQAAAKTGKIVKVKKGQFLAPWDMKNVQTKLETFGVKDILFTERGACFGYNNLVSDMRSLAIMAELNVPVVFDATHSVQQPGGLGGSTGGERKYVELLAKAATSVGIAGMYMEVHQDPDNAPSDGPCMMKLDNLESILIKLKKYDKITKEK</sequence>
<name>KDSA_RICPU</name>
<evidence type="ECO:0000255" key="1">
    <source>
        <dbReference type="HAMAP-Rule" id="MF_00056"/>
    </source>
</evidence>
<keyword id="KW-0963">Cytoplasm</keyword>
<keyword id="KW-0448">Lipopolysaccharide biosynthesis</keyword>
<keyword id="KW-0808">Transferase</keyword>
<accession>C4K181</accession>
<dbReference type="EC" id="2.5.1.55" evidence="1"/>
<dbReference type="EMBL" id="CP001227">
    <property type="protein sequence ID" value="ACR47332.1"/>
    <property type="molecule type" value="Genomic_DNA"/>
</dbReference>
<dbReference type="RefSeq" id="WP_012736593.1">
    <property type="nucleotide sequence ID" value="NC_012730.1"/>
</dbReference>
<dbReference type="SMR" id="C4K181"/>
<dbReference type="KEGG" id="rpk:RPR_02535"/>
<dbReference type="HOGENOM" id="CLU_036666_0_0_5"/>
<dbReference type="UniPathway" id="UPA00030"/>
<dbReference type="UniPathway" id="UPA00357">
    <property type="reaction ID" value="UER00474"/>
</dbReference>
<dbReference type="Proteomes" id="UP000005015">
    <property type="component" value="Chromosome"/>
</dbReference>
<dbReference type="GO" id="GO:0005737">
    <property type="term" value="C:cytoplasm"/>
    <property type="evidence" value="ECO:0007669"/>
    <property type="project" value="UniProtKB-SubCell"/>
</dbReference>
<dbReference type="GO" id="GO:0008676">
    <property type="term" value="F:3-deoxy-8-phosphooctulonate synthase activity"/>
    <property type="evidence" value="ECO:0007669"/>
    <property type="project" value="UniProtKB-UniRule"/>
</dbReference>
<dbReference type="GO" id="GO:0019294">
    <property type="term" value="P:keto-3-deoxy-D-manno-octulosonic acid biosynthetic process"/>
    <property type="evidence" value="ECO:0007669"/>
    <property type="project" value="UniProtKB-UniRule"/>
</dbReference>
<dbReference type="Gene3D" id="3.20.20.70">
    <property type="entry name" value="Aldolase class I"/>
    <property type="match status" value="1"/>
</dbReference>
<dbReference type="HAMAP" id="MF_00056">
    <property type="entry name" value="KDO8P_synth"/>
    <property type="match status" value="1"/>
</dbReference>
<dbReference type="InterPro" id="IPR013785">
    <property type="entry name" value="Aldolase_TIM"/>
</dbReference>
<dbReference type="InterPro" id="IPR006218">
    <property type="entry name" value="DAHP1/KDSA"/>
</dbReference>
<dbReference type="InterPro" id="IPR006269">
    <property type="entry name" value="KDO8P_synthase"/>
</dbReference>
<dbReference type="NCBIfam" id="TIGR01362">
    <property type="entry name" value="KDO8P_synth"/>
    <property type="match status" value="1"/>
</dbReference>
<dbReference type="NCBIfam" id="NF003543">
    <property type="entry name" value="PRK05198.1"/>
    <property type="match status" value="1"/>
</dbReference>
<dbReference type="PANTHER" id="PTHR21057">
    <property type="entry name" value="PHOSPHO-2-DEHYDRO-3-DEOXYHEPTONATE ALDOLASE"/>
    <property type="match status" value="1"/>
</dbReference>
<dbReference type="Pfam" id="PF00793">
    <property type="entry name" value="DAHP_synth_1"/>
    <property type="match status" value="1"/>
</dbReference>
<dbReference type="SUPFAM" id="SSF51569">
    <property type="entry name" value="Aldolase"/>
    <property type="match status" value="1"/>
</dbReference>
<protein>
    <recommendedName>
        <fullName evidence="1">2-dehydro-3-deoxyphosphooctonate aldolase</fullName>
        <ecNumber evidence="1">2.5.1.55</ecNumber>
    </recommendedName>
    <alternativeName>
        <fullName evidence="1">3-deoxy-D-manno-octulosonic acid 8-phosphate synthase</fullName>
    </alternativeName>
    <alternativeName>
        <fullName evidence="1">KDO-8-phosphate synthase</fullName>
        <shortName evidence="1">KDO 8-P synthase</shortName>
        <shortName evidence="1">KDOPS</shortName>
    </alternativeName>
    <alternativeName>
        <fullName evidence="1">Phospho-2-dehydro-3-deoxyoctonate aldolase</fullName>
    </alternativeName>
</protein>
<reference key="1">
    <citation type="journal article" date="2009" name="PLoS ONE">
        <title>Genome sequence of the endosymbiont Rickettsia peacockii and comparison with virulent Rickettsia rickettsii: identification of virulence factors.</title>
        <authorList>
            <person name="Felsheim R.F."/>
            <person name="Kurtti T.J."/>
            <person name="Munderloh U.G."/>
        </authorList>
    </citation>
    <scope>NUCLEOTIDE SEQUENCE [LARGE SCALE GENOMIC DNA]</scope>
    <source>
        <strain>Rustic</strain>
    </source>
</reference>
<proteinExistence type="inferred from homology"/>
<gene>
    <name evidence="1" type="primary">kdsA</name>
    <name type="ordered locus">RPR_02535</name>
</gene>
<comment type="catalytic activity">
    <reaction evidence="1">
        <text>D-arabinose 5-phosphate + phosphoenolpyruvate + H2O = 3-deoxy-alpha-D-manno-2-octulosonate-8-phosphate + phosphate</text>
        <dbReference type="Rhea" id="RHEA:14053"/>
        <dbReference type="ChEBI" id="CHEBI:15377"/>
        <dbReference type="ChEBI" id="CHEBI:43474"/>
        <dbReference type="ChEBI" id="CHEBI:57693"/>
        <dbReference type="ChEBI" id="CHEBI:58702"/>
        <dbReference type="ChEBI" id="CHEBI:85985"/>
        <dbReference type="EC" id="2.5.1.55"/>
    </reaction>
</comment>
<comment type="pathway">
    <text evidence="1">Carbohydrate biosynthesis; 3-deoxy-D-manno-octulosonate biosynthesis; 3-deoxy-D-manno-octulosonate from D-ribulose 5-phosphate: step 2/3.</text>
</comment>
<comment type="pathway">
    <text evidence="1">Bacterial outer membrane biogenesis; lipopolysaccharide biosynthesis.</text>
</comment>
<comment type="subcellular location">
    <subcellularLocation>
        <location evidence="1">Cytoplasm</location>
    </subcellularLocation>
</comment>
<comment type="similarity">
    <text evidence="1">Belongs to the KdsA family.</text>
</comment>
<organism>
    <name type="scientific">Rickettsia peacockii (strain Rustic)</name>
    <dbReference type="NCBI Taxonomy" id="562019"/>
    <lineage>
        <taxon>Bacteria</taxon>
        <taxon>Pseudomonadati</taxon>
        <taxon>Pseudomonadota</taxon>
        <taxon>Alphaproteobacteria</taxon>
        <taxon>Rickettsiales</taxon>
        <taxon>Rickettsiaceae</taxon>
        <taxon>Rickettsieae</taxon>
        <taxon>Rickettsia</taxon>
        <taxon>spotted fever group</taxon>
    </lineage>
</organism>
<feature type="chain" id="PRO_1000202338" description="2-dehydro-3-deoxyphosphooctonate aldolase">
    <location>
        <begin position="1"/>
        <end position="274"/>
    </location>
</feature>